<dbReference type="EMBL" id="AB018116">
    <property type="protein sequence ID" value="BAA97144.1"/>
    <property type="molecule type" value="Genomic_DNA"/>
</dbReference>
<dbReference type="EMBL" id="CP002688">
    <property type="protein sequence ID" value="AED96293.1"/>
    <property type="molecule type" value="Genomic_DNA"/>
</dbReference>
<dbReference type="RefSeq" id="NP_200116.1">
    <property type="nucleotide sequence ID" value="NM_124683.1"/>
</dbReference>
<dbReference type="SMR" id="Q9LVU8"/>
<dbReference type="STRING" id="3702.Q9LVU8"/>
<dbReference type="PaxDb" id="3702-AT5G53040.1"/>
<dbReference type="EnsemblPlants" id="AT5G53040.1">
    <property type="protein sequence ID" value="AT5G53040.1"/>
    <property type="gene ID" value="AT5G53040"/>
</dbReference>
<dbReference type="GeneID" id="835383"/>
<dbReference type="Gramene" id="AT5G53040.1">
    <property type="protein sequence ID" value="AT5G53040.1"/>
    <property type="gene ID" value="AT5G53040"/>
</dbReference>
<dbReference type="KEGG" id="ath:AT5G53040"/>
<dbReference type="Araport" id="AT5G53040"/>
<dbReference type="TAIR" id="AT5G53040">
    <property type="gene designation" value="RKD4"/>
</dbReference>
<dbReference type="eggNOG" id="ENOG502QSPQ">
    <property type="taxonomic scope" value="Eukaryota"/>
</dbReference>
<dbReference type="HOGENOM" id="CLU_071153_3_1_1"/>
<dbReference type="InParanoid" id="Q9LVU8"/>
<dbReference type="OMA" id="FFDRPIM"/>
<dbReference type="PRO" id="PR:Q9LVU8"/>
<dbReference type="Proteomes" id="UP000006548">
    <property type="component" value="Chromosome 5"/>
</dbReference>
<dbReference type="ExpressionAtlas" id="Q9LVU8">
    <property type="expression patterns" value="baseline"/>
</dbReference>
<dbReference type="GO" id="GO:0005634">
    <property type="term" value="C:nucleus"/>
    <property type="evidence" value="ECO:0000314"/>
    <property type="project" value="TAIR"/>
</dbReference>
<dbReference type="GO" id="GO:0003677">
    <property type="term" value="F:DNA binding"/>
    <property type="evidence" value="ECO:0007669"/>
    <property type="project" value="UniProtKB-KW"/>
</dbReference>
<dbReference type="GO" id="GO:0003700">
    <property type="term" value="F:DNA-binding transcription factor activity"/>
    <property type="evidence" value="ECO:0000250"/>
    <property type="project" value="TAIR"/>
</dbReference>
<dbReference type="GO" id="GO:0009793">
    <property type="term" value="P:embryo development ending in seed dormancy"/>
    <property type="evidence" value="ECO:0000315"/>
    <property type="project" value="TAIR"/>
</dbReference>
<dbReference type="InterPro" id="IPR044607">
    <property type="entry name" value="RKD-like"/>
</dbReference>
<dbReference type="InterPro" id="IPR003035">
    <property type="entry name" value="RWP-RK_dom"/>
</dbReference>
<dbReference type="PANTHER" id="PTHR46373">
    <property type="entry name" value="PROTEIN RKD4"/>
    <property type="match status" value="1"/>
</dbReference>
<dbReference type="PANTHER" id="PTHR46373:SF27">
    <property type="entry name" value="PROTEIN RKD4"/>
    <property type="match status" value="1"/>
</dbReference>
<dbReference type="Pfam" id="PF02042">
    <property type="entry name" value="RWP-RK"/>
    <property type="match status" value="1"/>
</dbReference>
<dbReference type="PROSITE" id="PS51519">
    <property type="entry name" value="RWP_RK"/>
    <property type="match status" value="1"/>
</dbReference>
<gene>
    <name type="primary">RKD4</name>
    <name type="ordered locus">At5g53040</name>
    <name type="ORF">MNB8.10</name>
</gene>
<comment type="function">
    <text evidence="1">Putative transcription factor.</text>
</comment>
<comment type="subcellular location">
    <subcellularLocation>
        <location evidence="3">Nucleus</location>
    </subcellularLocation>
</comment>
<organism>
    <name type="scientific">Arabidopsis thaliana</name>
    <name type="common">Mouse-ear cress</name>
    <dbReference type="NCBI Taxonomy" id="3702"/>
    <lineage>
        <taxon>Eukaryota</taxon>
        <taxon>Viridiplantae</taxon>
        <taxon>Streptophyta</taxon>
        <taxon>Embryophyta</taxon>
        <taxon>Tracheophyta</taxon>
        <taxon>Spermatophyta</taxon>
        <taxon>Magnoliopsida</taxon>
        <taxon>eudicotyledons</taxon>
        <taxon>Gunneridae</taxon>
        <taxon>Pentapetalae</taxon>
        <taxon>rosids</taxon>
        <taxon>malvids</taxon>
        <taxon>Brassicales</taxon>
        <taxon>Brassicaceae</taxon>
        <taxon>Camelineae</taxon>
        <taxon>Arabidopsis</taxon>
    </lineage>
</organism>
<sequence length="256" mass="29896">MSSSKHSSVFNYSALFLSLFLQQMDQNSLHHLDSPKIENEYEPDSLYDMLDKLPPLDSLLDMEDLKPNAGLHFQFHYNSFEDFFENIEVDNTIPSDIHLLTQEPYFSSDSSSSSPLAIQNDGLISNVKVEKVTVKKKRNLKKKRQDKLEMSEIKQFFDRPIMKAAKELNVGLTVLKKRCRELGIYRWPHRKLKSLNSLIKNLKNVGMEEEVKNLEEHRFLIEQEPDAELSDGTKKLRQACFKANYKRRKSLGDDYY</sequence>
<reference key="1">
    <citation type="journal article" date="2000" name="DNA Res.">
        <title>Structural analysis of Arabidopsis thaliana chromosome 5. X. Sequence features of the regions of 3,076,755 bp covered by sixty P1 and TAC clones.</title>
        <authorList>
            <person name="Sato S."/>
            <person name="Nakamura Y."/>
            <person name="Kaneko T."/>
            <person name="Katoh T."/>
            <person name="Asamizu E."/>
            <person name="Kotani H."/>
            <person name="Tabata S."/>
        </authorList>
    </citation>
    <scope>NUCLEOTIDE SEQUENCE [LARGE SCALE GENOMIC DNA]</scope>
    <source>
        <strain>cv. Columbia</strain>
    </source>
</reference>
<reference key="2">
    <citation type="journal article" date="2017" name="Plant J.">
        <title>Araport11: a complete reannotation of the Arabidopsis thaliana reference genome.</title>
        <authorList>
            <person name="Cheng C.Y."/>
            <person name="Krishnakumar V."/>
            <person name="Chan A.P."/>
            <person name="Thibaud-Nissen F."/>
            <person name="Schobel S."/>
            <person name="Town C.D."/>
        </authorList>
    </citation>
    <scope>GENOME REANNOTATION</scope>
    <source>
        <strain>cv. Columbia</strain>
    </source>
</reference>
<reference key="3">
    <citation type="journal article" date="2005" name="J. Mol. Evol.">
        <title>Evolution of NIN-like proteins in Arabidopsis, rice, and Lotus japonicus.</title>
        <authorList>
            <person name="Schauser L."/>
            <person name="Wieloch W."/>
            <person name="Stougaard J."/>
        </authorList>
    </citation>
    <scope>GENE FAMILY</scope>
    <scope>NOMENCLATURE</scope>
</reference>
<evidence type="ECO:0000250" key="1"/>
<evidence type="ECO:0000255" key="2"/>
<evidence type="ECO:0000255" key="3">
    <source>
        <dbReference type="PROSITE-ProRule" id="PRU00852"/>
    </source>
</evidence>
<keyword id="KW-0175">Coiled coil</keyword>
<keyword id="KW-0238">DNA-binding</keyword>
<keyword id="KW-0539">Nucleus</keyword>
<keyword id="KW-1185">Reference proteome</keyword>
<keyword id="KW-0804">Transcription</keyword>
<keyword id="KW-0805">Transcription regulation</keyword>
<protein>
    <recommendedName>
        <fullName>Protein RKD4</fullName>
        <shortName>AtRKD4</shortName>
    </recommendedName>
    <alternativeName>
        <fullName>RWP-RK domain-containing protein 4</fullName>
    </alternativeName>
</protein>
<name>RKD4_ARATH</name>
<feature type="chain" id="PRO_0000401498" description="Protein RKD4">
    <location>
        <begin position="1"/>
        <end position="256"/>
    </location>
</feature>
<feature type="domain" description="RWP-RK" evidence="3">
    <location>
        <begin position="130"/>
        <end position="216"/>
    </location>
</feature>
<feature type="coiled-coil region" evidence="2">
    <location>
        <begin position="190"/>
        <end position="224"/>
    </location>
</feature>
<proteinExistence type="inferred from homology"/>
<accession>Q9LVU8</accession>